<comment type="function">
    <text evidence="1">Allows the formation of correctly charged Asn-tRNA(Asn) or Gln-tRNA(Gln) through the transamidation of misacylated Asp-tRNA(Asn) or Glu-tRNA(Gln) in organisms which lack either or both of asparaginyl-tRNA or glutaminyl-tRNA synthetases. The reaction takes place in the presence of glutamine and ATP through an activated phospho-Asp-tRNA(Asn) or phospho-Glu-tRNA(Gln).</text>
</comment>
<comment type="catalytic activity">
    <reaction evidence="1">
        <text>L-glutamyl-tRNA(Gln) + L-glutamine + ATP + H2O = L-glutaminyl-tRNA(Gln) + L-glutamate + ADP + phosphate + H(+)</text>
        <dbReference type="Rhea" id="RHEA:17521"/>
        <dbReference type="Rhea" id="RHEA-COMP:9681"/>
        <dbReference type="Rhea" id="RHEA-COMP:9684"/>
        <dbReference type="ChEBI" id="CHEBI:15377"/>
        <dbReference type="ChEBI" id="CHEBI:15378"/>
        <dbReference type="ChEBI" id="CHEBI:29985"/>
        <dbReference type="ChEBI" id="CHEBI:30616"/>
        <dbReference type="ChEBI" id="CHEBI:43474"/>
        <dbReference type="ChEBI" id="CHEBI:58359"/>
        <dbReference type="ChEBI" id="CHEBI:78520"/>
        <dbReference type="ChEBI" id="CHEBI:78521"/>
        <dbReference type="ChEBI" id="CHEBI:456216"/>
    </reaction>
</comment>
<comment type="catalytic activity">
    <reaction evidence="1">
        <text>L-aspartyl-tRNA(Asn) + L-glutamine + ATP + H2O = L-asparaginyl-tRNA(Asn) + L-glutamate + ADP + phosphate + 2 H(+)</text>
        <dbReference type="Rhea" id="RHEA:14513"/>
        <dbReference type="Rhea" id="RHEA-COMP:9674"/>
        <dbReference type="Rhea" id="RHEA-COMP:9677"/>
        <dbReference type="ChEBI" id="CHEBI:15377"/>
        <dbReference type="ChEBI" id="CHEBI:15378"/>
        <dbReference type="ChEBI" id="CHEBI:29985"/>
        <dbReference type="ChEBI" id="CHEBI:30616"/>
        <dbReference type="ChEBI" id="CHEBI:43474"/>
        <dbReference type="ChEBI" id="CHEBI:58359"/>
        <dbReference type="ChEBI" id="CHEBI:78515"/>
        <dbReference type="ChEBI" id="CHEBI:78516"/>
        <dbReference type="ChEBI" id="CHEBI:456216"/>
    </reaction>
</comment>
<comment type="subunit">
    <text evidence="1">Heterotrimer of A, B and C subunits.</text>
</comment>
<comment type="similarity">
    <text evidence="1">Belongs to the GatC family.</text>
</comment>
<organism>
    <name type="scientific">Streptococcus suis (strain 05ZYH33)</name>
    <dbReference type="NCBI Taxonomy" id="391295"/>
    <lineage>
        <taxon>Bacteria</taxon>
        <taxon>Bacillati</taxon>
        <taxon>Bacillota</taxon>
        <taxon>Bacilli</taxon>
        <taxon>Lactobacillales</taxon>
        <taxon>Streptococcaceae</taxon>
        <taxon>Streptococcus</taxon>
    </lineage>
</organism>
<evidence type="ECO:0000255" key="1">
    <source>
        <dbReference type="HAMAP-Rule" id="MF_00122"/>
    </source>
</evidence>
<dbReference type="EC" id="6.3.5.-" evidence="1"/>
<dbReference type="EMBL" id="CP000407">
    <property type="protein sequence ID" value="ABP89321.1"/>
    <property type="molecule type" value="Genomic_DNA"/>
</dbReference>
<dbReference type="SMR" id="A4VT82"/>
<dbReference type="STRING" id="391295.SSU05_0354"/>
<dbReference type="KEGG" id="ssu:SSU05_0354"/>
<dbReference type="eggNOG" id="COG0721">
    <property type="taxonomic scope" value="Bacteria"/>
</dbReference>
<dbReference type="HOGENOM" id="CLU_105899_1_2_9"/>
<dbReference type="GO" id="GO:0050566">
    <property type="term" value="F:asparaginyl-tRNA synthase (glutamine-hydrolyzing) activity"/>
    <property type="evidence" value="ECO:0007669"/>
    <property type="project" value="RHEA"/>
</dbReference>
<dbReference type="GO" id="GO:0005524">
    <property type="term" value="F:ATP binding"/>
    <property type="evidence" value="ECO:0007669"/>
    <property type="project" value="UniProtKB-KW"/>
</dbReference>
<dbReference type="GO" id="GO:0050567">
    <property type="term" value="F:glutaminyl-tRNA synthase (glutamine-hydrolyzing) activity"/>
    <property type="evidence" value="ECO:0007669"/>
    <property type="project" value="UniProtKB-UniRule"/>
</dbReference>
<dbReference type="GO" id="GO:0070681">
    <property type="term" value="P:glutaminyl-tRNAGln biosynthesis via transamidation"/>
    <property type="evidence" value="ECO:0007669"/>
    <property type="project" value="TreeGrafter"/>
</dbReference>
<dbReference type="GO" id="GO:0006450">
    <property type="term" value="P:regulation of translational fidelity"/>
    <property type="evidence" value="ECO:0007669"/>
    <property type="project" value="InterPro"/>
</dbReference>
<dbReference type="GO" id="GO:0006412">
    <property type="term" value="P:translation"/>
    <property type="evidence" value="ECO:0007669"/>
    <property type="project" value="UniProtKB-UniRule"/>
</dbReference>
<dbReference type="Gene3D" id="1.10.20.60">
    <property type="entry name" value="Glu-tRNAGln amidotransferase C subunit, N-terminal domain"/>
    <property type="match status" value="1"/>
</dbReference>
<dbReference type="HAMAP" id="MF_00122">
    <property type="entry name" value="GatC"/>
    <property type="match status" value="1"/>
</dbReference>
<dbReference type="InterPro" id="IPR036113">
    <property type="entry name" value="Asp/Glu-ADT_sf_sub_c"/>
</dbReference>
<dbReference type="InterPro" id="IPR003837">
    <property type="entry name" value="GatC"/>
</dbReference>
<dbReference type="NCBIfam" id="TIGR00135">
    <property type="entry name" value="gatC"/>
    <property type="match status" value="1"/>
</dbReference>
<dbReference type="PANTHER" id="PTHR15004">
    <property type="entry name" value="GLUTAMYL-TRNA(GLN) AMIDOTRANSFERASE SUBUNIT C, MITOCHONDRIAL"/>
    <property type="match status" value="1"/>
</dbReference>
<dbReference type="PANTHER" id="PTHR15004:SF0">
    <property type="entry name" value="GLUTAMYL-TRNA(GLN) AMIDOTRANSFERASE SUBUNIT C, MITOCHONDRIAL"/>
    <property type="match status" value="1"/>
</dbReference>
<dbReference type="Pfam" id="PF02686">
    <property type="entry name" value="GatC"/>
    <property type="match status" value="1"/>
</dbReference>
<dbReference type="SUPFAM" id="SSF141000">
    <property type="entry name" value="Glu-tRNAGln amidotransferase C subunit"/>
    <property type="match status" value="1"/>
</dbReference>
<feature type="chain" id="PRO_1000016225" description="Aspartyl/glutamyl-tRNA(Asn/Gln) amidotransferase subunit C">
    <location>
        <begin position="1"/>
        <end position="100"/>
    </location>
</feature>
<proteinExistence type="inferred from homology"/>
<gene>
    <name evidence="1" type="primary">gatC</name>
    <name type="ordered locus">SSU05_0354</name>
</gene>
<reference key="1">
    <citation type="journal article" date="2007" name="PLoS ONE">
        <title>A glimpse of streptococcal toxic shock syndrome from comparative genomics of S. suis 2 Chinese isolates.</title>
        <authorList>
            <person name="Chen C."/>
            <person name="Tang J."/>
            <person name="Dong W."/>
            <person name="Wang C."/>
            <person name="Feng Y."/>
            <person name="Wang J."/>
            <person name="Zheng F."/>
            <person name="Pan X."/>
            <person name="Liu D."/>
            <person name="Li M."/>
            <person name="Song Y."/>
            <person name="Zhu X."/>
            <person name="Sun H."/>
            <person name="Feng T."/>
            <person name="Guo Z."/>
            <person name="Ju A."/>
            <person name="Ge J."/>
            <person name="Dong Y."/>
            <person name="Sun W."/>
            <person name="Jiang Y."/>
            <person name="Wang J."/>
            <person name="Yan J."/>
            <person name="Yang H."/>
            <person name="Wang X."/>
            <person name="Gao G.F."/>
            <person name="Yang R."/>
            <person name="Wang J."/>
            <person name="Yu J."/>
        </authorList>
    </citation>
    <scope>NUCLEOTIDE SEQUENCE [LARGE SCALE GENOMIC DNA]</scope>
    <source>
        <strain>05ZYH33</strain>
    </source>
</reference>
<accession>A4VT82</accession>
<sequence length="100" mass="10939">MKISEAEVRHVAKLSKLEFSDQETAEFATSLSKIVDMVELLNEVDTTGVAVTTTMADRKNVLRADIAQKGESREELFKNVPESQDNFIKVPAILDGGGDA</sequence>
<keyword id="KW-0067">ATP-binding</keyword>
<keyword id="KW-0436">Ligase</keyword>
<keyword id="KW-0547">Nucleotide-binding</keyword>
<keyword id="KW-0648">Protein biosynthesis</keyword>
<name>GATC_STRSY</name>
<protein>
    <recommendedName>
        <fullName evidence="1">Aspartyl/glutamyl-tRNA(Asn/Gln) amidotransferase subunit C</fullName>
        <shortName evidence="1">Asp/Glu-ADT subunit C</shortName>
        <ecNumber evidence="1">6.3.5.-</ecNumber>
    </recommendedName>
</protein>